<dbReference type="EMBL" id="Y11130">
    <property type="protein sequence ID" value="CAA72012.1"/>
    <property type="molecule type" value="mRNA"/>
</dbReference>
<dbReference type="RefSeq" id="NP_001075980.2">
    <property type="nucleotide sequence ID" value="NM_001082511.2"/>
</dbReference>
<dbReference type="SMR" id="Q9XSQ6"/>
<dbReference type="FunCoup" id="Q9XSQ6">
    <property type="interactions" value="231"/>
</dbReference>
<dbReference type="STRING" id="9796.ENSECAP00000022221"/>
<dbReference type="GlyCosmos" id="Q9XSQ6">
    <property type="glycosylation" value="3 sites, No reported glycans"/>
</dbReference>
<dbReference type="PaxDb" id="9796-ENSECAP00000022221"/>
<dbReference type="GeneID" id="100034215"/>
<dbReference type="KEGG" id="ecb:100034215"/>
<dbReference type="CTD" id="3592"/>
<dbReference type="InParanoid" id="Q9XSQ6"/>
<dbReference type="OrthoDB" id="9893660at2759"/>
<dbReference type="Proteomes" id="UP000002281">
    <property type="component" value="Unplaced"/>
</dbReference>
<dbReference type="GO" id="GO:0043514">
    <property type="term" value="C:interleukin-12 complex"/>
    <property type="evidence" value="ECO:0000318"/>
    <property type="project" value="GO_Central"/>
</dbReference>
<dbReference type="GO" id="GO:0005125">
    <property type="term" value="F:cytokine activity"/>
    <property type="evidence" value="ECO:0007669"/>
    <property type="project" value="UniProtKB-KW"/>
</dbReference>
<dbReference type="GO" id="GO:0008083">
    <property type="term" value="F:growth factor activity"/>
    <property type="evidence" value="ECO:0007669"/>
    <property type="project" value="UniProtKB-KW"/>
</dbReference>
<dbReference type="GO" id="GO:0005143">
    <property type="term" value="F:interleukin-12 receptor binding"/>
    <property type="evidence" value="ECO:0000318"/>
    <property type="project" value="GO_Central"/>
</dbReference>
<dbReference type="GO" id="GO:0006955">
    <property type="term" value="P:immune response"/>
    <property type="evidence" value="ECO:0007669"/>
    <property type="project" value="InterPro"/>
</dbReference>
<dbReference type="GO" id="GO:0035722">
    <property type="term" value="P:interleukin-12-mediated signaling pathway"/>
    <property type="evidence" value="ECO:0000318"/>
    <property type="project" value="GO_Central"/>
</dbReference>
<dbReference type="FunFam" id="1.20.1250.10:FF:000020">
    <property type="entry name" value="Interleukin-12 subunit alpha"/>
    <property type="match status" value="1"/>
</dbReference>
<dbReference type="Gene3D" id="1.20.1250.10">
    <property type="match status" value="1"/>
</dbReference>
<dbReference type="InterPro" id="IPR009079">
    <property type="entry name" value="4_helix_cytokine-like_core"/>
</dbReference>
<dbReference type="InterPro" id="IPR050676">
    <property type="entry name" value="IL-12"/>
</dbReference>
<dbReference type="InterPro" id="IPR004281">
    <property type="entry name" value="IL-12_alpha"/>
</dbReference>
<dbReference type="PANTHER" id="PTHR48485:SF1">
    <property type="entry name" value="INTERLEUKIN-12 SUBUNIT ALPHA"/>
    <property type="match status" value="1"/>
</dbReference>
<dbReference type="PANTHER" id="PTHR48485">
    <property type="entry name" value="INTERLEUKIN-12 SUBUNIT BETA-RELATED"/>
    <property type="match status" value="1"/>
</dbReference>
<dbReference type="Pfam" id="PF03039">
    <property type="entry name" value="IL12"/>
    <property type="match status" value="1"/>
</dbReference>
<dbReference type="SUPFAM" id="SSF47266">
    <property type="entry name" value="4-helical cytokines"/>
    <property type="match status" value="1"/>
</dbReference>
<sequence length="222" mass="24800">MCPPRGLLLVAILVLLNHLDHLSLARNLPTATPGPGMFQCLNHSQNLLRTVSNTLQKARQTLEFYSCTSEEIDHEDITKDKSSTVAACLPLELAPNESCLASREISFITNGSCLTPGKASSMMTLCLSSIYEDLKMYQVEFKAMNAKLLIDPQRQIFLDENMLTAIDKLMQALNFNSETVPQKPSLEGLDFYKTKVKLCILLHAFRIRAVTINRMMGYLNAS</sequence>
<proteinExistence type="evidence at transcript level"/>
<evidence type="ECO:0000250" key="1"/>
<evidence type="ECO:0000250" key="2">
    <source>
        <dbReference type="UniProtKB" id="P29459"/>
    </source>
</evidence>
<evidence type="ECO:0000250" key="3">
    <source>
        <dbReference type="UniProtKB" id="P43431"/>
    </source>
</evidence>
<evidence type="ECO:0000255" key="4"/>
<evidence type="ECO:0000305" key="5"/>
<comment type="function">
    <text evidence="2 3">Heterodimerizes with IL12B to form the IL-12 cytokine or with EBI3/IL27B to form the IL-35 cytokine. IL-12 is primarily produced by professional antigen-presenting cells (APCs) such as B-cells and dendritic cells (DCs) as well as macrophages and granulocytes and regulates T-cell and natural killer-cell responses, induces the production of interferon-gamma (IFN-gamma), favors the differentiation of T-helper 1 (Th1) cells and is an important link between innate resistance and adaptive immunity. Mechanistically, exerts its biological effects through a receptor composed of IL12R1 and IL12R2 subunits. Binding to the receptor results in the rapid tyrosine phosphorylation of a number of cellular substrates including the JAK family kinases TYK2 and JAK2. In turn, recruited STAT4 gets phosphorylated and translocates to the nucleus where it regulates cytokine/growth factor responsive genes (By similarity). As part of IL-35, plays essential roles in maintaining the immune homeostasis of the liver microenvironment and also functions as an immune-suppressive cytokine (By similarity). Mediates biological events through unconventional receptors composed of IL12RB2 and gp130/IL6ST heterodimers or homodimers. Signaling requires the transcription factors STAT1 and STAT4, which form a unique heterodimer that binds to distinct DNA sites (By similarity).</text>
</comment>
<comment type="subunit">
    <text evidence="2 3">Heterodimer with IL12B; disulfide-linked. This heterodimer is known as interleukin IL-12. Heterodimer with EBI3/IL27B; not disulfide-linked. This heterodimer is known as interleukin IL-35. Interacts with NBR1; this interaction promotes IL-12 secretion (By similarity).</text>
</comment>
<comment type="subcellular location">
    <subcellularLocation>
        <location evidence="2">Secreted</location>
    </subcellularLocation>
</comment>
<comment type="similarity">
    <text evidence="5">Belongs to the IL-6 superfamily.</text>
</comment>
<reference key="1">
    <citation type="journal article" date="1999" name="Immunogenetics">
        <title>Cloning and sequencing of horse interleukin-12 and interleukin-18 cDNAs.</title>
        <authorList>
            <person name="Nicolson L."/>
            <person name="Penha-Goncalves M.N."/>
            <person name="Keanie J.L."/>
            <person name="Logan N.A."/>
            <person name="Argyle D.J."/>
            <person name="Onions D.E."/>
        </authorList>
    </citation>
    <scope>NUCLEOTIDE SEQUENCE [MRNA]</scope>
</reference>
<protein>
    <recommendedName>
        <fullName>Interleukin-12 subunit alpha</fullName>
        <shortName>IL-12A</shortName>
    </recommendedName>
    <alternativeName>
        <fullName>Cytotoxic lymphocyte maturation factor 35 kDa subunit</fullName>
        <shortName>CLMF p35</shortName>
    </alternativeName>
    <alternativeName>
        <fullName>IL-12 subunit p35</fullName>
    </alternativeName>
</protein>
<keyword id="KW-0202">Cytokine</keyword>
<keyword id="KW-1015">Disulfide bond</keyword>
<keyword id="KW-0325">Glycoprotein</keyword>
<keyword id="KW-0339">Growth factor</keyword>
<keyword id="KW-1185">Reference proteome</keyword>
<keyword id="KW-0964">Secreted</keyword>
<keyword id="KW-0732">Signal</keyword>
<gene>
    <name type="primary">IL12A</name>
</gene>
<feature type="signal peptide" evidence="1">
    <location>
        <begin position="1"/>
        <end position="25"/>
    </location>
</feature>
<feature type="chain" id="PRO_0000015603" description="Interleukin-12 subunit alpha">
    <location>
        <begin position="26"/>
        <end position="222"/>
    </location>
</feature>
<feature type="glycosylation site" description="N-linked (GlcNAc...) asparagine" evidence="4">
    <location>
        <position position="42"/>
    </location>
</feature>
<feature type="glycosylation site" description="N-linked (GlcNAc...) asparagine" evidence="4">
    <location>
        <position position="96"/>
    </location>
</feature>
<feature type="glycosylation site" description="N-linked (GlcNAc...) asparagine" evidence="4">
    <location>
        <position position="110"/>
    </location>
</feature>
<feature type="disulfide bond" evidence="2">
    <location>
        <begin position="40"/>
        <end position="113"/>
    </location>
</feature>
<feature type="disulfide bond" evidence="1">
    <location>
        <begin position="67"/>
        <end position="199"/>
    </location>
</feature>
<feature type="disulfide bond" evidence="1">
    <location>
        <begin position="88"/>
        <end position="126"/>
    </location>
</feature>
<feature type="disulfide bond" description="Interchain (with C-200 in IL12B)" evidence="1">
    <location>
        <position position="99"/>
    </location>
</feature>
<organism>
    <name type="scientific">Equus caballus</name>
    <name type="common">Horse</name>
    <dbReference type="NCBI Taxonomy" id="9796"/>
    <lineage>
        <taxon>Eukaryota</taxon>
        <taxon>Metazoa</taxon>
        <taxon>Chordata</taxon>
        <taxon>Craniata</taxon>
        <taxon>Vertebrata</taxon>
        <taxon>Euteleostomi</taxon>
        <taxon>Mammalia</taxon>
        <taxon>Eutheria</taxon>
        <taxon>Laurasiatheria</taxon>
        <taxon>Perissodactyla</taxon>
        <taxon>Equidae</taxon>
        <taxon>Equus</taxon>
    </lineage>
</organism>
<accession>Q9XSQ6</accession>
<name>IL12A_HORSE</name>